<feature type="chain" id="PRO_0000459769" description="Ferredoxin--NADP reductase B">
    <location>
        <begin position="1"/>
        <end position="244"/>
    </location>
</feature>
<feature type="domain" description="FAD-binding FR-type" evidence="2">
    <location>
        <begin position="4"/>
        <end position="106"/>
    </location>
</feature>
<feature type="binding site" evidence="1">
    <location>
        <begin position="55"/>
        <end position="58"/>
    </location>
    <ligand>
        <name>FAD</name>
        <dbReference type="ChEBI" id="CHEBI:57692"/>
    </ligand>
</feature>
<feature type="binding site" evidence="1">
    <location>
        <position position="120"/>
    </location>
    <ligand>
        <name>FAD</name>
        <dbReference type="ChEBI" id="CHEBI:57692"/>
    </ligand>
</feature>
<gene>
    <name evidence="7" type="ordered locus">sce5135</name>
</gene>
<keyword id="KW-0274">FAD</keyword>
<keyword id="KW-0285">Flavoprotein</keyword>
<keyword id="KW-0521">NADP</keyword>
<keyword id="KW-0547">Nucleotide-binding</keyword>
<keyword id="KW-0560">Oxidoreductase</keyword>
<keyword id="KW-1185">Reference proteome</keyword>
<dbReference type="EC" id="1.18.1.2" evidence="6"/>
<dbReference type="EMBL" id="AM746676">
    <property type="protein sequence ID" value="CAN95298.1"/>
    <property type="molecule type" value="Genomic_DNA"/>
</dbReference>
<dbReference type="RefSeq" id="WP_012237766.1">
    <property type="nucleotide sequence ID" value="NC_010162.1"/>
</dbReference>
<dbReference type="SMR" id="A9FRJ0"/>
<dbReference type="STRING" id="448385.sce5135"/>
<dbReference type="KEGG" id="scl:sce5135"/>
<dbReference type="eggNOG" id="COG1018">
    <property type="taxonomic scope" value="Bacteria"/>
</dbReference>
<dbReference type="HOGENOM" id="CLU_003827_7_3_7"/>
<dbReference type="OrthoDB" id="9784483at2"/>
<dbReference type="BioCyc" id="SCEL448385:SCE_RS26355-MONOMER"/>
<dbReference type="Proteomes" id="UP000002139">
    <property type="component" value="Chromosome"/>
</dbReference>
<dbReference type="GO" id="GO:0000166">
    <property type="term" value="F:nucleotide binding"/>
    <property type="evidence" value="ECO:0007669"/>
    <property type="project" value="UniProtKB-KW"/>
</dbReference>
<dbReference type="GO" id="GO:0016491">
    <property type="term" value="F:oxidoreductase activity"/>
    <property type="evidence" value="ECO:0007669"/>
    <property type="project" value="UniProtKB-KW"/>
</dbReference>
<dbReference type="CDD" id="cd00322">
    <property type="entry name" value="FNR_like"/>
    <property type="match status" value="1"/>
</dbReference>
<dbReference type="Gene3D" id="3.40.50.80">
    <property type="entry name" value="Nucleotide-binding domain of ferredoxin-NADP reductase (FNR) module"/>
    <property type="match status" value="1"/>
</dbReference>
<dbReference type="Gene3D" id="2.40.30.10">
    <property type="entry name" value="Translation factors"/>
    <property type="match status" value="1"/>
</dbReference>
<dbReference type="InterPro" id="IPR008333">
    <property type="entry name" value="Cbr1-like_FAD-bd_dom"/>
</dbReference>
<dbReference type="InterPro" id="IPR017927">
    <property type="entry name" value="FAD-bd_FR_type"/>
</dbReference>
<dbReference type="InterPro" id="IPR001709">
    <property type="entry name" value="Flavoprot_Pyr_Nucl_cyt_Rdtase"/>
</dbReference>
<dbReference type="InterPro" id="IPR039261">
    <property type="entry name" value="FNR_nucleotide-bd"/>
</dbReference>
<dbReference type="InterPro" id="IPR050415">
    <property type="entry name" value="MRET"/>
</dbReference>
<dbReference type="InterPro" id="IPR001433">
    <property type="entry name" value="OxRdtase_FAD/NAD-bd"/>
</dbReference>
<dbReference type="InterPro" id="IPR017938">
    <property type="entry name" value="Riboflavin_synthase-like_b-brl"/>
</dbReference>
<dbReference type="PANTHER" id="PTHR47354">
    <property type="entry name" value="NADH OXIDOREDUCTASE HCR"/>
    <property type="match status" value="1"/>
</dbReference>
<dbReference type="PANTHER" id="PTHR47354:SF5">
    <property type="entry name" value="PROTEIN RFBI"/>
    <property type="match status" value="1"/>
</dbReference>
<dbReference type="Pfam" id="PF00970">
    <property type="entry name" value="FAD_binding_6"/>
    <property type="match status" value="1"/>
</dbReference>
<dbReference type="Pfam" id="PF00175">
    <property type="entry name" value="NAD_binding_1"/>
    <property type="match status" value="1"/>
</dbReference>
<dbReference type="PRINTS" id="PR00371">
    <property type="entry name" value="FPNCR"/>
</dbReference>
<dbReference type="PRINTS" id="PR00410">
    <property type="entry name" value="PHEHYDRXLASE"/>
</dbReference>
<dbReference type="SUPFAM" id="SSF52343">
    <property type="entry name" value="Ferredoxin reductase-like, C-terminal NADP-linked domain"/>
    <property type="match status" value="1"/>
</dbReference>
<dbReference type="SUPFAM" id="SSF63380">
    <property type="entry name" value="Riboflavin synthase domain-like"/>
    <property type="match status" value="1"/>
</dbReference>
<dbReference type="PROSITE" id="PS51384">
    <property type="entry name" value="FAD_FR"/>
    <property type="match status" value="1"/>
</dbReference>
<organism>
    <name type="scientific">Sorangium cellulosum (strain So ce56)</name>
    <name type="common">Polyangium cellulosum (strain So ce56)</name>
    <dbReference type="NCBI Taxonomy" id="448385"/>
    <lineage>
        <taxon>Bacteria</taxon>
        <taxon>Pseudomonadati</taxon>
        <taxon>Myxococcota</taxon>
        <taxon>Polyangia</taxon>
        <taxon>Polyangiales</taxon>
        <taxon>Polyangiaceae</taxon>
        <taxon>Sorangium</taxon>
    </lineage>
</organism>
<evidence type="ECO:0000250" key="1">
    <source>
        <dbReference type="UniProtKB" id="P28861"/>
    </source>
</evidence>
<evidence type="ECO:0000255" key="2">
    <source>
        <dbReference type="PROSITE-ProRule" id="PRU00716"/>
    </source>
</evidence>
<evidence type="ECO:0000269" key="3">
    <source>
    </source>
</evidence>
<evidence type="ECO:0000303" key="4">
    <source>
    </source>
</evidence>
<evidence type="ECO:0000305" key="5"/>
<evidence type="ECO:0000305" key="6">
    <source>
    </source>
</evidence>
<evidence type="ECO:0000312" key="7">
    <source>
        <dbReference type="EMBL" id="CAN95298.1"/>
    </source>
</evidence>
<reference key="1">
    <citation type="journal article" date="2007" name="Nat. Biotechnol.">
        <title>Complete genome sequence of the myxobacterium Sorangium cellulosum.</title>
        <authorList>
            <person name="Schneiker S."/>
            <person name="Perlova O."/>
            <person name="Kaiser O."/>
            <person name="Gerth K."/>
            <person name="Alici A."/>
            <person name="Altmeyer M.O."/>
            <person name="Bartels D."/>
            <person name="Bekel T."/>
            <person name="Beyer S."/>
            <person name="Bode E."/>
            <person name="Bode H.B."/>
            <person name="Bolten C.J."/>
            <person name="Choudhuri J.V."/>
            <person name="Doss S."/>
            <person name="Elnakady Y.A."/>
            <person name="Frank B."/>
            <person name="Gaigalat L."/>
            <person name="Goesmann A."/>
            <person name="Groeger C."/>
            <person name="Gross F."/>
            <person name="Jelsbak L."/>
            <person name="Jelsbak L."/>
            <person name="Kalinowski J."/>
            <person name="Kegler C."/>
            <person name="Knauber T."/>
            <person name="Konietzny S."/>
            <person name="Kopp M."/>
            <person name="Krause L."/>
            <person name="Krug D."/>
            <person name="Linke B."/>
            <person name="Mahmud T."/>
            <person name="Martinez-Arias R."/>
            <person name="McHardy A.C."/>
            <person name="Merai M."/>
            <person name="Meyer F."/>
            <person name="Mormann S."/>
            <person name="Munoz-Dorado J."/>
            <person name="Perez J."/>
            <person name="Pradella S."/>
            <person name="Rachid S."/>
            <person name="Raddatz G."/>
            <person name="Rosenau F."/>
            <person name="Rueckert C."/>
            <person name="Sasse F."/>
            <person name="Scharfe M."/>
            <person name="Schuster S.C."/>
            <person name="Suen G."/>
            <person name="Treuner-Lange A."/>
            <person name="Velicer G.J."/>
            <person name="Vorholter F.-J."/>
            <person name="Weissman K.J."/>
            <person name="Welch R.D."/>
            <person name="Wenzel S.C."/>
            <person name="Whitworth D.E."/>
            <person name="Wilhelm S."/>
            <person name="Wittmann C."/>
            <person name="Bloecker H."/>
            <person name="Puehler A."/>
            <person name="Mueller R."/>
        </authorList>
    </citation>
    <scope>NUCLEOTIDE SEQUENCE [LARGE SCALE GENOMIC DNA]</scope>
    <source>
        <strain>So ce56</strain>
    </source>
</reference>
<reference key="2">
    <citation type="journal article" date="2009" name="J. Biol. Chem.">
        <title>Genome mining in Sorangium cellulosum So ce56: identification and characterization of the homologous electron transfer proteins of a myxobacterial cytochrome P450.</title>
        <authorList>
            <person name="Ewen K.M."/>
            <person name="Hannemann F."/>
            <person name="Khatri Y."/>
            <person name="Perlova O."/>
            <person name="Kappl R."/>
            <person name="Krug D."/>
            <person name="Huettermann J."/>
            <person name="Mueller R."/>
            <person name="Bernhardt R."/>
        </authorList>
    </citation>
    <scope>FUNCTION</scope>
    <scope>CATALYTIC ACTIVITY</scope>
    <scope>COFACTOR</scope>
    <scope>BIOPHYSICOCHEMICAL PROPERTIES</scope>
    <source>
        <strain>So ce56</strain>
    </source>
</reference>
<comment type="function">
    <text evidence="3">Transports electrons between NADPH and ferredoxin (PubMed:19696019). Can transfer electrons to ferredoxins Fdx2 and Fdx8 (PubMed:19696019). Prefers NADPH to NADH (PubMed:19696019).</text>
</comment>
<comment type="catalytic activity">
    <reaction evidence="6">
        <text>2 reduced [4Fe-4S]-[ferredoxin] + NADP(+) + H(+) = 2 oxidized [4Fe-4S]-[ferredoxin] + NADPH</text>
        <dbReference type="Rhea" id="RHEA:76995"/>
        <dbReference type="Rhea" id="RHEA-COMP:18797"/>
        <dbReference type="Rhea" id="RHEA-COMP:18798"/>
        <dbReference type="ChEBI" id="CHEBI:15378"/>
        <dbReference type="ChEBI" id="CHEBI:33722"/>
        <dbReference type="ChEBI" id="CHEBI:33723"/>
        <dbReference type="ChEBI" id="CHEBI:57783"/>
        <dbReference type="ChEBI" id="CHEBI:58349"/>
        <dbReference type="EC" id="1.18.1.2"/>
    </reaction>
</comment>
<comment type="cofactor">
    <cofactor evidence="3">
        <name>FAD</name>
        <dbReference type="ChEBI" id="CHEBI:57692"/>
    </cofactor>
</comment>
<comment type="biophysicochemical properties">
    <kinetics>
        <KM evidence="3">120 uM for NADPH</KM>
    </kinetics>
</comment>
<comment type="similarity">
    <text evidence="5">Belongs to the ferredoxin--NADP reductase type 1 family.</text>
</comment>
<sequence length="244" mass="26665">MIQAEPFEARLVAVRPLSPFVRELSFERADGKAFLFEAGQWVNLVLPLPGGEVKRAYSIASAPDGSPRFDLAVTRVEGGAGSEYLHRLEPGATLRAVGPHGLFTRDPGSPAPSLFVATGTGVTPLRSMLRASLRAGAAAHLWILFGARFEEDIIYRDELEALARGSDRIRYEITLSRGGPSWSGRRGYVQAHVPELYRELAGASGDPAPHVFICGLDRMVSLVRELARGELGVPRKHVHVERYD</sequence>
<accession>A9FRJ0</accession>
<proteinExistence type="evidence at protein level"/>
<name>FDRB_SORC5</name>
<protein>
    <recommendedName>
        <fullName evidence="5">Ferredoxin--NADP reductase B</fullName>
        <ecNumber evidence="6">1.18.1.2</ecNumber>
    </recommendedName>
    <alternativeName>
        <fullName evidence="4">Ferredoxin reductase FdR_B</fullName>
    </alternativeName>
</protein>